<sequence>MKFNIANPTTGCQKKLEIDDDQKLRAFYDKRISQEVSGDALGEEFKGYVFKIMGGCDKQGFPMKQGVLTPGRVRLLLHRGTPCFRGYGRRNGERRRKSVRGCIVSPDLSVLNLVIVKKGENDLPGLTDVEKPRMRGPKRASKIRKLFNLSKEDDVRKYVNTYRRTFTNKKGKTCSKAPKIQRLVTPLTLQRKRARIAEKKKRVAKAKSEAAEYQKLLASRLKEQRDRRSESLAKKRSRLSAAAAKTASVSA</sequence>
<gene>
    <name type="primary">rps6</name>
</gene>
<protein>
    <recommendedName>
        <fullName evidence="3">Small ribosomal subunit protein eS6</fullName>
    </recommendedName>
    <alternativeName>
        <fullName>40S ribosomal protein S6</fullName>
    </alternativeName>
</protein>
<organism>
    <name type="scientific">Asparagus officinalis</name>
    <name type="common">Garden asparagus</name>
    <dbReference type="NCBI Taxonomy" id="4686"/>
    <lineage>
        <taxon>Eukaryota</taxon>
        <taxon>Viridiplantae</taxon>
        <taxon>Streptophyta</taxon>
        <taxon>Embryophyta</taxon>
        <taxon>Tracheophyta</taxon>
        <taxon>Spermatophyta</taxon>
        <taxon>Magnoliopsida</taxon>
        <taxon>Liliopsida</taxon>
        <taxon>Asparagales</taxon>
        <taxon>Asparagaceae</taxon>
        <taxon>Asparagoideae</taxon>
        <taxon>Asparagus</taxon>
    </lineage>
</organism>
<feature type="chain" id="PRO_0000137331" description="Small ribosomal subunit protein eS6">
    <location>
        <begin position="1"/>
        <end position="251"/>
    </location>
</feature>
<feature type="region of interest" description="Disordered" evidence="2">
    <location>
        <begin position="218"/>
        <end position="251"/>
    </location>
</feature>
<feature type="compositionally biased region" description="Basic and acidic residues" evidence="2">
    <location>
        <begin position="220"/>
        <end position="233"/>
    </location>
</feature>
<feature type="compositionally biased region" description="Low complexity" evidence="2">
    <location>
        <begin position="239"/>
        <end position="251"/>
    </location>
</feature>
<name>RS6_ASPOF</name>
<reference key="1">
    <citation type="submission" date="2000-04" db="EMBL/GenBank/DDBJ databases">
        <title>Characterisation of an asparagus S6 ribosomal protein cDNA and an S6 ribosomal protein kinase homologue.</title>
        <authorList>
            <person name="Deacon K."/>
            <person name="Warner S.A.J."/>
            <person name="Draper J."/>
        </authorList>
    </citation>
    <scope>NUCLEOTIDE SEQUENCE [MRNA]</scope>
    <source>
        <strain>cv. Conovers Colossal</strain>
    </source>
</reference>
<comment type="function">
    <text evidence="1">Component of the 40S small ribosomal subunit (By similarity). Plays an important role in controlling cell growth and proliferation through the selective translation of particular classes of mRNA (By similarity).</text>
</comment>
<comment type="PTM">
    <text evidence="1">Ribosomal protein S6 is the major substrate of protein kinases in eukaryote ribosomes.</text>
</comment>
<comment type="similarity">
    <text evidence="3">Belongs to the eukaryotic ribosomal protein eS6 family.</text>
</comment>
<keyword id="KW-0597">Phosphoprotein</keyword>
<keyword id="KW-0687">Ribonucleoprotein</keyword>
<keyword id="KW-0689">Ribosomal protein</keyword>
<accession>Q9M3V8</accession>
<evidence type="ECO:0000250" key="1">
    <source>
        <dbReference type="UniProtKB" id="P62753"/>
    </source>
</evidence>
<evidence type="ECO:0000256" key="2">
    <source>
        <dbReference type="SAM" id="MobiDB-lite"/>
    </source>
</evidence>
<evidence type="ECO:0000305" key="3"/>
<proteinExistence type="evidence at transcript level"/>
<dbReference type="EMBL" id="AJ277533">
    <property type="protein sequence ID" value="CAB89081.1"/>
    <property type="molecule type" value="mRNA"/>
</dbReference>
<dbReference type="SMR" id="Q9M3V8"/>
<dbReference type="EnsemblPlants" id="ONK74793">
    <property type="protein sequence ID" value="ONK74793"/>
    <property type="gene ID" value="A4U43_C03F10200"/>
</dbReference>
<dbReference type="EnsemblPlants" id="ONK75576">
    <property type="protein sequence ID" value="ONK75576"/>
    <property type="gene ID" value="A4U43_C03F18360"/>
</dbReference>
<dbReference type="Gramene" id="ONK74793">
    <property type="protein sequence ID" value="ONK74793"/>
    <property type="gene ID" value="A4U43_C03F10200"/>
</dbReference>
<dbReference type="Gramene" id="ONK75576">
    <property type="protein sequence ID" value="ONK75576"/>
    <property type="gene ID" value="A4U43_C03F18360"/>
</dbReference>
<dbReference type="OMA" id="EPCHIEG"/>
<dbReference type="OrthoDB" id="496369at2759"/>
<dbReference type="GO" id="GO:1990904">
    <property type="term" value="C:ribonucleoprotein complex"/>
    <property type="evidence" value="ECO:0007669"/>
    <property type="project" value="UniProtKB-KW"/>
</dbReference>
<dbReference type="GO" id="GO:0005840">
    <property type="term" value="C:ribosome"/>
    <property type="evidence" value="ECO:0007669"/>
    <property type="project" value="UniProtKB-KW"/>
</dbReference>
<dbReference type="GO" id="GO:0003735">
    <property type="term" value="F:structural constituent of ribosome"/>
    <property type="evidence" value="ECO:0007669"/>
    <property type="project" value="InterPro"/>
</dbReference>
<dbReference type="GO" id="GO:0006412">
    <property type="term" value="P:translation"/>
    <property type="evidence" value="ECO:0007669"/>
    <property type="project" value="InterPro"/>
</dbReference>
<dbReference type="Gene3D" id="1.20.5.2650">
    <property type="match status" value="1"/>
</dbReference>
<dbReference type="InterPro" id="IPR001377">
    <property type="entry name" value="Ribosomal_eS6"/>
</dbReference>
<dbReference type="InterPro" id="IPR014401">
    <property type="entry name" value="Ribosomal_eS6-like"/>
</dbReference>
<dbReference type="InterPro" id="IPR018282">
    <property type="entry name" value="Ribosomal_eS6_CS"/>
</dbReference>
<dbReference type="PANTHER" id="PTHR11502">
    <property type="entry name" value="40S RIBOSOMAL PROTEIN S6"/>
    <property type="match status" value="1"/>
</dbReference>
<dbReference type="Pfam" id="PF01092">
    <property type="entry name" value="Ribosomal_S6e"/>
    <property type="match status" value="1"/>
</dbReference>
<dbReference type="PIRSF" id="PIRSF002129">
    <property type="entry name" value="Ribosom_S6_euk"/>
    <property type="match status" value="1"/>
</dbReference>
<dbReference type="SMART" id="SM01405">
    <property type="entry name" value="Ribosomal_S6e"/>
    <property type="match status" value="1"/>
</dbReference>
<dbReference type="PROSITE" id="PS00578">
    <property type="entry name" value="RIBOSOMAL_S6E"/>
    <property type="match status" value="1"/>
</dbReference>